<protein>
    <recommendedName>
        <fullName>Core protein p19</fullName>
    </recommendedName>
    <alternativeName>
        <fullName>Gag protein p19</fullName>
    </alternativeName>
</protein>
<comment type="subcellular location">
    <subcellularLocation>
        <location evidence="2">Virion</location>
    </subcellularLocation>
</comment>
<comment type="domain">
    <text evidence="2">Late-budding domains (L domains) are short sequence motifs essential for viral particle budding. They recruit proteins of the host ESCRT machinery (Endosomal Sorting Complex Required for Transport) or ESCRT-associated proteins. Gag contains one L domain: a PPXY motif which potentially interacts with the WW domain 3 of NEDD4 E3 ubiquitin ligase (Potential).</text>
</comment>
<comment type="miscellaneous">
    <text>This protein is a product of the Gag-Ros or p19-Ros polyprotein.</text>
</comment>
<reference key="1">
    <citation type="journal article" date="1985" name="J. Virol.">
        <title>Nucleotide sequence of avian sarcoma virus UR2 and comparison of its transforming gene with other members of the tyrosine protein kinase oncogene family.</title>
        <authorList>
            <person name="Neckameyer W.S."/>
            <person name="Wang L.-H."/>
        </authorList>
    </citation>
    <scope>NUCLEOTIDE SEQUENCE</scope>
</reference>
<keyword id="KW-0946">Virion</keyword>
<accession>P03324</accession>
<evidence type="ECO:0000256" key="1">
    <source>
        <dbReference type="SAM" id="MobiDB-lite"/>
    </source>
</evidence>
<evidence type="ECO:0000305" key="2"/>
<organismHost>
    <name type="scientific">Galliformes</name>
    <dbReference type="NCBI Taxonomy" id="8976"/>
</organismHost>
<dbReference type="EMBL" id="M10455">
    <property type="protein sequence ID" value="AAA18252.1"/>
    <property type="molecule type" value="Unassigned_DNA"/>
</dbReference>
<dbReference type="PIR" id="A03925">
    <property type="entry name" value="A03925"/>
</dbReference>
<dbReference type="RefSeq" id="NP_042289.1">
    <property type="nucleotide sequence ID" value="NC_001618.1"/>
</dbReference>
<dbReference type="SMR" id="P03324"/>
<dbReference type="KEGG" id="vg:1491916"/>
<dbReference type="OrthoDB" id="17085at10239"/>
<dbReference type="Proteomes" id="UP000143802">
    <property type="component" value="Genome"/>
</dbReference>
<dbReference type="GO" id="GO:0044423">
    <property type="term" value="C:virion component"/>
    <property type="evidence" value="ECO:0007669"/>
    <property type="project" value="UniProtKB-KW"/>
</dbReference>
<dbReference type="Gene3D" id="1.10.150.90">
    <property type="entry name" value="Immunodeficiency lentiviruses, gag gene matrix protein p17"/>
    <property type="match status" value="1"/>
</dbReference>
<dbReference type="InterPro" id="IPR004028">
    <property type="entry name" value="Gag_M"/>
</dbReference>
<dbReference type="InterPro" id="IPR012344">
    <property type="entry name" value="Matrix_HIV/RSV_N"/>
</dbReference>
<dbReference type="InterPro" id="IPR010999">
    <property type="entry name" value="Retrovr_matrix"/>
</dbReference>
<dbReference type="Pfam" id="PF02813">
    <property type="entry name" value="Retro_M"/>
    <property type="match status" value="1"/>
</dbReference>
<dbReference type="SUPFAM" id="SSF47836">
    <property type="entry name" value="Retroviral matrix proteins"/>
    <property type="match status" value="1"/>
</dbReference>
<sequence>MEAVIKVISSACKTYCGKTSPSKKEIGAMLSLLQKEGLLMSPSDLYSPGSWDPITAALSQRLMVLGKSGELKTWGLVLGALKAAREEQVTSEQAKFWLGLGGGRVSPPGPECIEKPATERRIDKGEEVGETTVQRDAKMAPEETATPKTV</sequence>
<feature type="chain" id="PRO_0000125474" description="Core protein p19">
    <location>
        <begin position="1"/>
        <end position="150"/>
    </location>
</feature>
<feature type="region of interest" description="Disordered" evidence="1">
    <location>
        <begin position="107"/>
        <end position="150"/>
    </location>
</feature>
<feature type="compositionally biased region" description="Basic and acidic residues" evidence="1">
    <location>
        <begin position="112"/>
        <end position="141"/>
    </location>
</feature>
<proteinExistence type="predicted"/>
<gene>
    <name type="primary">gag</name>
</gene>
<name>GAG_AVISU</name>
<organism>
    <name type="scientific">UR2 avian sarcoma virus</name>
    <name type="common">UR2SV</name>
    <name type="synonym">Avian sarcoma virus (strain UR2)</name>
    <dbReference type="NCBI Taxonomy" id="354090"/>
    <lineage>
        <taxon>Viruses</taxon>
        <taxon>Riboviria</taxon>
        <taxon>Pararnavirae</taxon>
        <taxon>Artverviricota</taxon>
        <taxon>Revtraviricetes</taxon>
        <taxon>Ortervirales</taxon>
        <taxon>Retroviridae</taxon>
        <taxon>Orthoretrovirinae</taxon>
        <taxon>Alpharetrovirus</taxon>
    </lineage>
</organism>